<protein>
    <recommendedName>
        <fullName>Inorganic pyrophosphatase</fullName>
        <ecNumber>3.6.1.1</ecNumber>
    </recommendedName>
    <alternativeName>
        <fullName>Pyrophosphate phospho-hydrolase</fullName>
        <shortName>PPase</shortName>
    </alternativeName>
</protein>
<evidence type="ECO:0000250" key="1"/>
<evidence type="ECO:0000250" key="2">
    <source>
        <dbReference type="UniProtKB" id="Q15181"/>
    </source>
</evidence>
<evidence type="ECO:0000305" key="3"/>
<gene>
    <name type="primary">PPA1</name>
    <name type="synonym">PP</name>
</gene>
<reference key="1">
    <citation type="journal article" date="1992" name="J. Biol. Chem.">
        <title>Molecular cloning and functional expression of cDNA encoding a mammalian inorganic pyrophosphatase.</title>
        <authorList>
            <person name="Yang Z."/>
            <person name="Wensel T.G."/>
        </authorList>
    </citation>
    <scope>NUCLEOTIDE SEQUENCE [MRNA]</scope>
    <scope>PARTIAL PROTEIN SEQUENCE</scope>
    <source>
        <tissue>Retina</tissue>
    </source>
</reference>
<reference key="2">
    <citation type="submission" date="2006-04" db="EMBL/GenBank/DDBJ databases">
        <authorList>
            <consortium name="NIH - Mammalian Gene Collection (MGC) project"/>
        </authorList>
    </citation>
    <scope>NUCLEOTIDE SEQUENCE [LARGE SCALE MRNA]</scope>
    <source>
        <strain>Hereford</strain>
        <tissue>Ascending colon</tissue>
    </source>
</reference>
<name>IPYR_BOVIN</name>
<comment type="catalytic activity">
    <reaction>
        <text>diphosphate + H2O = 2 phosphate + H(+)</text>
        <dbReference type="Rhea" id="RHEA:24576"/>
        <dbReference type="ChEBI" id="CHEBI:15377"/>
        <dbReference type="ChEBI" id="CHEBI:15378"/>
        <dbReference type="ChEBI" id="CHEBI:33019"/>
        <dbReference type="ChEBI" id="CHEBI:43474"/>
        <dbReference type="EC" id="3.6.1.1"/>
    </reaction>
</comment>
<comment type="cofactor">
    <cofactor evidence="1">
        <name>Mg(2+)</name>
        <dbReference type="ChEBI" id="CHEBI:18420"/>
    </cofactor>
</comment>
<comment type="subunit">
    <text>Homodimer.</text>
</comment>
<comment type="subcellular location">
    <subcellularLocation>
        <location>Cytoplasm</location>
    </subcellularLocation>
</comment>
<comment type="tissue specificity">
    <text>Highest levels are found in retinal rod outer segments.</text>
</comment>
<comment type="PTM">
    <text>The N-terminus is blocked.</text>
</comment>
<comment type="similarity">
    <text evidence="3">Belongs to the PPase family.</text>
</comment>
<keyword id="KW-0007">Acetylation</keyword>
<keyword id="KW-0963">Cytoplasm</keyword>
<keyword id="KW-0903">Direct protein sequencing</keyword>
<keyword id="KW-0378">Hydrolase</keyword>
<keyword id="KW-0460">Magnesium</keyword>
<keyword id="KW-0479">Metal-binding</keyword>
<keyword id="KW-0597">Phosphoprotein</keyword>
<keyword id="KW-1185">Reference proteome</keyword>
<dbReference type="EC" id="3.6.1.1"/>
<dbReference type="EMBL" id="M95283">
    <property type="status" value="NOT_ANNOTATED_CDS"/>
    <property type="molecule type" value="mRNA"/>
</dbReference>
<dbReference type="EMBL" id="BC114891">
    <property type="protein sequence ID" value="AAI14892.1"/>
    <property type="molecule type" value="mRNA"/>
</dbReference>
<dbReference type="PIR" id="A45153">
    <property type="entry name" value="A45153"/>
</dbReference>
<dbReference type="RefSeq" id="NP_001068586.1">
    <property type="nucleotide sequence ID" value="NM_001075118.1"/>
</dbReference>
<dbReference type="SMR" id="P37980"/>
<dbReference type="FunCoup" id="P37980">
    <property type="interactions" value="2233"/>
</dbReference>
<dbReference type="STRING" id="9913.ENSBTAP00000010311"/>
<dbReference type="PaxDb" id="9913-ENSBTAP00000010311"/>
<dbReference type="PeptideAtlas" id="P37980"/>
<dbReference type="Ensembl" id="ENSBTAT00000010311.3">
    <property type="protein sequence ID" value="ENSBTAP00000010311.2"/>
    <property type="gene ID" value="ENSBTAG00000007836.4"/>
</dbReference>
<dbReference type="GeneID" id="280701"/>
<dbReference type="KEGG" id="bta:280701"/>
<dbReference type="CTD" id="5464"/>
<dbReference type="VEuPathDB" id="HostDB:ENSBTAG00000007836"/>
<dbReference type="VGNC" id="VGNC:55992">
    <property type="gene designation" value="PPA1"/>
</dbReference>
<dbReference type="eggNOG" id="KOG1626">
    <property type="taxonomic scope" value="Eukaryota"/>
</dbReference>
<dbReference type="GeneTree" id="ENSGT00390000017004"/>
<dbReference type="HOGENOM" id="CLU_040684_0_2_1"/>
<dbReference type="InParanoid" id="P37980"/>
<dbReference type="OMA" id="GVWAMID"/>
<dbReference type="OrthoDB" id="1608002at2759"/>
<dbReference type="TreeFam" id="TF300887"/>
<dbReference type="BRENDA" id="3.6.1.1">
    <property type="organism ID" value="908"/>
</dbReference>
<dbReference type="Reactome" id="R-BTA-379716">
    <property type="pathway name" value="Cytosolic tRNA aminoacylation"/>
</dbReference>
<dbReference type="Reactome" id="R-BTA-71737">
    <property type="pathway name" value="Pyrophosphate hydrolysis"/>
</dbReference>
<dbReference type="Proteomes" id="UP000009136">
    <property type="component" value="Chromosome 28"/>
</dbReference>
<dbReference type="Bgee" id="ENSBTAG00000007836">
    <property type="expression patterns" value="Expressed in oocyte and 104 other cell types or tissues"/>
</dbReference>
<dbReference type="GO" id="GO:0005737">
    <property type="term" value="C:cytoplasm"/>
    <property type="evidence" value="ECO:0007669"/>
    <property type="project" value="UniProtKB-SubCell"/>
</dbReference>
<dbReference type="GO" id="GO:0004427">
    <property type="term" value="F:inorganic diphosphate phosphatase activity"/>
    <property type="evidence" value="ECO:0000318"/>
    <property type="project" value="GO_Central"/>
</dbReference>
<dbReference type="GO" id="GO:0000287">
    <property type="term" value="F:magnesium ion binding"/>
    <property type="evidence" value="ECO:0007669"/>
    <property type="project" value="InterPro"/>
</dbReference>
<dbReference type="GO" id="GO:0006796">
    <property type="term" value="P:phosphate-containing compound metabolic process"/>
    <property type="evidence" value="ECO:0000318"/>
    <property type="project" value="GO_Central"/>
</dbReference>
<dbReference type="CDD" id="cd00412">
    <property type="entry name" value="pyrophosphatase"/>
    <property type="match status" value="1"/>
</dbReference>
<dbReference type="FunFam" id="3.90.80.10:FF:000005">
    <property type="entry name" value="Pyrophosphatase (inorganic) 2"/>
    <property type="match status" value="1"/>
</dbReference>
<dbReference type="Gene3D" id="3.90.80.10">
    <property type="entry name" value="Inorganic pyrophosphatase"/>
    <property type="match status" value="1"/>
</dbReference>
<dbReference type="InterPro" id="IPR008162">
    <property type="entry name" value="Pyrophosphatase"/>
</dbReference>
<dbReference type="InterPro" id="IPR036649">
    <property type="entry name" value="Pyrophosphatase_sf"/>
</dbReference>
<dbReference type="PANTHER" id="PTHR10286">
    <property type="entry name" value="INORGANIC PYROPHOSPHATASE"/>
    <property type="match status" value="1"/>
</dbReference>
<dbReference type="Pfam" id="PF00719">
    <property type="entry name" value="Pyrophosphatase"/>
    <property type="match status" value="1"/>
</dbReference>
<dbReference type="SUPFAM" id="SSF50324">
    <property type="entry name" value="Inorganic pyrophosphatase"/>
    <property type="match status" value="1"/>
</dbReference>
<dbReference type="PROSITE" id="PS00387">
    <property type="entry name" value="PPASE"/>
    <property type="match status" value="1"/>
</dbReference>
<accession>P37980</accession>
<accession>Q1RMH6</accession>
<sequence>MSGFSSEERAAPFTLEYRVFLKNEKGQYISPFHDIPIYADKEVFHMVVEVPRWSNAKMEIATKDPLNPIKQDVKKGKLRYVANLFPYKGYIWNYGAIPQTWEDPGHNDKHTGCCGDNDPIDVCEIGSKVCARGEIIRVKVLGILAMIDEGETDWKVIAINVEDPDAANYNDINDVKRLKPGYLEATVDWFRRYKVPDGKPENEFAFNAEFKDKNFAIDIIESTHDYWRALVTKKTDGKGISCMNTTVSESPFQCDPDAAKAIVDALPPPCESACTIPTDVDKWFHHQKN</sequence>
<organism>
    <name type="scientific">Bos taurus</name>
    <name type="common">Bovine</name>
    <dbReference type="NCBI Taxonomy" id="9913"/>
    <lineage>
        <taxon>Eukaryota</taxon>
        <taxon>Metazoa</taxon>
        <taxon>Chordata</taxon>
        <taxon>Craniata</taxon>
        <taxon>Vertebrata</taxon>
        <taxon>Euteleostomi</taxon>
        <taxon>Mammalia</taxon>
        <taxon>Eutheria</taxon>
        <taxon>Laurasiatheria</taxon>
        <taxon>Artiodactyla</taxon>
        <taxon>Ruminantia</taxon>
        <taxon>Pecora</taxon>
        <taxon>Bovidae</taxon>
        <taxon>Bovinae</taxon>
        <taxon>Bos</taxon>
    </lineage>
</organism>
<proteinExistence type="evidence at protein level"/>
<feature type="initiator methionine" description="Removed" evidence="2">
    <location>
        <position position="1"/>
    </location>
</feature>
<feature type="chain" id="PRO_0000137566" description="Inorganic pyrophosphatase">
    <location>
        <begin position="2"/>
        <end position="289"/>
    </location>
</feature>
<feature type="binding site" evidence="1">
    <location>
        <position position="116"/>
    </location>
    <ligand>
        <name>Mg(2+)</name>
        <dbReference type="ChEBI" id="CHEBI:18420"/>
        <label>1</label>
    </ligand>
</feature>
<feature type="binding site" evidence="1">
    <location>
        <position position="121"/>
    </location>
    <ligand>
        <name>Mg(2+)</name>
        <dbReference type="ChEBI" id="CHEBI:18420"/>
        <label>1</label>
    </ligand>
</feature>
<feature type="binding site" evidence="1">
    <location>
        <position position="121"/>
    </location>
    <ligand>
        <name>Mg(2+)</name>
        <dbReference type="ChEBI" id="CHEBI:18420"/>
        <label>2</label>
    </ligand>
</feature>
<feature type="binding site" evidence="1">
    <location>
        <position position="153"/>
    </location>
    <ligand>
        <name>Mg(2+)</name>
        <dbReference type="ChEBI" id="CHEBI:18420"/>
        <label>1</label>
    </ligand>
</feature>
<feature type="modified residue" description="N-acetylserine" evidence="2">
    <location>
        <position position="2"/>
    </location>
</feature>
<feature type="modified residue" description="N6-acetyllysine" evidence="2">
    <location>
        <position position="57"/>
    </location>
</feature>
<feature type="modified residue" description="Phosphoserine" evidence="2">
    <location>
        <position position="250"/>
    </location>
</feature>
<feature type="sequence conflict" description="In Ref. 1; AA sequence." evidence="3" ref="1">
    <original>G</original>
    <variation>S</variation>
    <location>
        <position position="3"/>
    </location>
</feature>